<reference key="1">
    <citation type="journal article" date="2003" name="Proc. Natl. Acad. Sci. U.S.A.">
        <title>The complete genome sequence of the carcinogenic bacterium Helicobacter hepaticus.</title>
        <authorList>
            <person name="Suerbaum S."/>
            <person name="Josenhans C."/>
            <person name="Sterzenbach T."/>
            <person name="Drescher B."/>
            <person name="Brandt P."/>
            <person name="Bell M."/>
            <person name="Droege M."/>
            <person name="Fartmann B."/>
            <person name="Fischer H.-P."/>
            <person name="Ge Z."/>
            <person name="Hoerster A."/>
            <person name="Holland R."/>
            <person name="Klein K."/>
            <person name="Koenig J."/>
            <person name="Macko L."/>
            <person name="Mendz G.L."/>
            <person name="Nyakatura G."/>
            <person name="Schauer D.B."/>
            <person name="Shen Z."/>
            <person name="Weber J."/>
            <person name="Frosch M."/>
            <person name="Fox J.G."/>
        </authorList>
    </citation>
    <scope>NUCLEOTIDE SEQUENCE [LARGE SCALE GENOMIC DNA]</scope>
    <source>
        <strain>ATCC 51449 / 3B1</strain>
    </source>
</reference>
<gene>
    <name type="primary">guaA</name>
    <name type="ordered locus">HH_1444</name>
</gene>
<comment type="function">
    <text evidence="1">Catalyzes the synthesis of GMP from XMP.</text>
</comment>
<comment type="catalytic activity">
    <reaction>
        <text>XMP + L-glutamine + ATP + H2O = GMP + L-glutamate + AMP + diphosphate + 2 H(+)</text>
        <dbReference type="Rhea" id="RHEA:11680"/>
        <dbReference type="ChEBI" id="CHEBI:15377"/>
        <dbReference type="ChEBI" id="CHEBI:15378"/>
        <dbReference type="ChEBI" id="CHEBI:29985"/>
        <dbReference type="ChEBI" id="CHEBI:30616"/>
        <dbReference type="ChEBI" id="CHEBI:33019"/>
        <dbReference type="ChEBI" id="CHEBI:57464"/>
        <dbReference type="ChEBI" id="CHEBI:58115"/>
        <dbReference type="ChEBI" id="CHEBI:58359"/>
        <dbReference type="ChEBI" id="CHEBI:456215"/>
        <dbReference type="EC" id="6.3.5.2"/>
    </reaction>
</comment>
<comment type="pathway">
    <text>Purine metabolism; GMP biosynthesis; GMP from XMP (L-Gln route): step 1/1.</text>
</comment>
<comment type="subunit">
    <text evidence="1">Homodimer.</text>
</comment>
<protein>
    <recommendedName>
        <fullName>Probable GMP synthase [glutamine-hydrolyzing]</fullName>
        <ecNumber>6.3.5.2</ecNumber>
    </recommendedName>
    <alternativeName>
        <fullName>GMP synthetase</fullName>
    </alternativeName>
    <alternativeName>
        <fullName>Glutamine amidotransferase</fullName>
    </alternativeName>
</protein>
<proteinExistence type="inferred from homology"/>
<sequence length="1375" mass="154160">MQENNVQILVLDFGSQYTQLIARRLREYGVYTEIVPYFEKLDSIKSKNPKGIILSGGPASVYEKDAYKPDSAIFTLGIPILGICYGMQLIAQHFGGRVIKADAQEFGKAVLEIMESSQDSKDSSCFAFQGASQGIQAPMTLSFDIFSHHKFPQMLTALLDLWEDSVQASHIFLTKQHIAEIRLEVKAALQSSQNIITATDKKDFLGFIGVEKNKIEMLFVASSVFRKGIGKALLKEALERYLKDYPYILVDCNEQNTQGLAFYKSLGFEKVGMSEKDSAGRDFPIVHLKVSKAILKKALERGTSDSVANAFVCESERVFLRPYTQADFAALHKIVSDKETMYAWGQGFSKKQSQEWLDKQLAHYQQYGFGIWAIIEKQSGAIIGNAGLNHTEISLKGKTQKIVEIGYLLHRDFWGKGYGSEVARMCVKYGFETLGLEEVYCLIKEDNTASIKVAKRLEMQKVGEYPKPYKGKKISHLVFRLEKKVWQESKNNATQGFKSCSLFKGIKQDSIVWMSHADKVESIPQGFRELAKSGNTHYCAIADSKRKIYALQFHPEVVHSECGGQMLQNFAVGICGANTCWNMRHFAQNEIEKLRRIVYGGKAHCENPMSFMQIQEAFKHIGKAQTIQRLVEIWEEGARATHKDLSENEIAGMREEIREAILKSKNLLIAQKNEEWLGFIEIEKNEIAMLFVVPKAFRKGVGKALLKEAFMRYLGAFEVIKVNSLEWALGFYQALGFAKTGKKPIPAGSAGAFSPELIPLSIARESLQKSLGLEAQDSNEGVREKVRCAWATDKDEAARKLYEDYHDTEWGEPLHEDKKLFEHLVLEGFQAGLSWITILKKREAFRVAFDDFDPHIVANYDEDKIKELMRNEGIIRNRAKIEAAIINAKAFMAVQREFGSFDKYIWGFVGGKPIINAFESIADLPASTPLSDKIAKDLKKRGFKFVGTTTMYAMMQSIGMVNDHLTSCFKCNSSLGMQCDKILDFSQGTNTKSANLTKNPKNLHSHTANTRIVDSQHTESSDIKGQSHLESSADSGSAVSLRDFKSCEGATRGSYLEGNDRSGVANSLKITKETTSKVLCAVSGGVDSSVVAALLYRAIGENLIPVFVDTGLLRKGEREAVEKIFKENLKVPLITADASELFLSRLKGVLDPEIKRKIIGETFIEVFEKEAKKHNTKGEIKFLAQGTLYPDVIESVSVKGPSKTIKSHHNVGGLPEWMKFELIEPLRELFKDEVRALGRELGMPESMLMRHPFPGPGLAIRIMGEVNKADLDLLREADSIFIDELHKQSYYDKVWQAFCVLLNVRSVGVMGDNRTYDNTICVRAVEAIDGMTATFAHLPHDFLEGVSNRIINEVEGINRVVYDITSKPPGTIEWE</sequence>
<dbReference type="EC" id="6.3.5.2"/>
<dbReference type="EMBL" id="AE017125">
    <property type="protein sequence ID" value="AAP78041.1"/>
    <property type="molecule type" value="Genomic_DNA"/>
</dbReference>
<dbReference type="SMR" id="Q7VG78"/>
<dbReference type="STRING" id="235279.HH_1444"/>
<dbReference type="KEGG" id="hhe:HH_1444"/>
<dbReference type="eggNOG" id="COG0519">
    <property type="taxonomic scope" value="Bacteria"/>
</dbReference>
<dbReference type="HOGENOM" id="CLU_255986_0_0_7"/>
<dbReference type="UniPathway" id="UPA00189">
    <property type="reaction ID" value="UER00296"/>
</dbReference>
<dbReference type="Proteomes" id="UP000002495">
    <property type="component" value="Chromosome"/>
</dbReference>
<dbReference type="GO" id="GO:0005829">
    <property type="term" value="C:cytosol"/>
    <property type="evidence" value="ECO:0007669"/>
    <property type="project" value="TreeGrafter"/>
</dbReference>
<dbReference type="GO" id="GO:0016747">
    <property type="term" value="F:acyltransferase activity, transferring groups other than amino-acyl groups"/>
    <property type="evidence" value="ECO:0007669"/>
    <property type="project" value="InterPro"/>
</dbReference>
<dbReference type="GO" id="GO:0005524">
    <property type="term" value="F:ATP binding"/>
    <property type="evidence" value="ECO:0007669"/>
    <property type="project" value="UniProtKB-KW"/>
</dbReference>
<dbReference type="GO" id="GO:0008725">
    <property type="term" value="F:DNA-3-methyladenine glycosylase activity"/>
    <property type="evidence" value="ECO:0007669"/>
    <property type="project" value="InterPro"/>
</dbReference>
<dbReference type="GO" id="GO:0003921">
    <property type="term" value="F:GMP synthase activity"/>
    <property type="evidence" value="ECO:0007669"/>
    <property type="project" value="InterPro"/>
</dbReference>
<dbReference type="GO" id="GO:0006284">
    <property type="term" value="P:base-excision repair"/>
    <property type="evidence" value="ECO:0007669"/>
    <property type="project" value="InterPro"/>
</dbReference>
<dbReference type="CDD" id="cd01997">
    <property type="entry name" value="GMP_synthase_C"/>
    <property type="match status" value="1"/>
</dbReference>
<dbReference type="CDD" id="cd04301">
    <property type="entry name" value="NAT_SF"/>
    <property type="match status" value="2"/>
</dbReference>
<dbReference type="FunFam" id="3.30.300.10:FF:000002">
    <property type="entry name" value="GMP synthase [glutamine-hydrolyzing]"/>
    <property type="match status" value="1"/>
</dbReference>
<dbReference type="FunFam" id="3.40.50.620:FF:000001">
    <property type="entry name" value="GMP synthase [glutamine-hydrolyzing]"/>
    <property type="match status" value="1"/>
</dbReference>
<dbReference type="Gene3D" id="3.30.300.10">
    <property type="match status" value="1"/>
</dbReference>
<dbReference type="Gene3D" id="3.40.50.880">
    <property type="match status" value="2"/>
</dbReference>
<dbReference type="Gene3D" id="3.40.630.30">
    <property type="match status" value="3"/>
</dbReference>
<dbReference type="Gene3D" id="3.40.50.620">
    <property type="entry name" value="HUPs"/>
    <property type="match status" value="1"/>
</dbReference>
<dbReference type="Gene3D" id="1.10.340.30">
    <property type="entry name" value="Hypothetical protein, domain 2"/>
    <property type="match status" value="1"/>
</dbReference>
<dbReference type="InterPro" id="IPR016181">
    <property type="entry name" value="Acyl_CoA_acyltransferase"/>
</dbReference>
<dbReference type="InterPro" id="IPR005019">
    <property type="entry name" value="Adenine_glyco"/>
</dbReference>
<dbReference type="InterPro" id="IPR029062">
    <property type="entry name" value="Class_I_gatase-like"/>
</dbReference>
<dbReference type="InterPro" id="IPR011257">
    <property type="entry name" value="DNA_glycosylase"/>
</dbReference>
<dbReference type="InterPro" id="IPR017926">
    <property type="entry name" value="GATASE"/>
</dbReference>
<dbReference type="InterPro" id="IPR001674">
    <property type="entry name" value="GMP_synth_C"/>
</dbReference>
<dbReference type="InterPro" id="IPR025777">
    <property type="entry name" value="GMPS_ATP_PPase_dom"/>
</dbReference>
<dbReference type="InterPro" id="IPR000182">
    <property type="entry name" value="GNAT_dom"/>
</dbReference>
<dbReference type="InterPro" id="IPR014729">
    <property type="entry name" value="Rossmann-like_a/b/a_fold"/>
</dbReference>
<dbReference type="NCBIfam" id="TIGR00884">
    <property type="entry name" value="guaA_Cterm"/>
    <property type="match status" value="1"/>
</dbReference>
<dbReference type="NCBIfam" id="NF000848">
    <property type="entry name" value="PRK00074.1"/>
    <property type="match status" value="1"/>
</dbReference>
<dbReference type="PANTHER" id="PTHR11922:SF2">
    <property type="entry name" value="GMP SYNTHASE [GLUTAMINE-HYDROLYZING]"/>
    <property type="match status" value="1"/>
</dbReference>
<dbReference type="PANTHER" id="PTHR11922">
    <property type="entry name" value="GMP SYNTHASE-RELATED"/>
    <property type="match status" value="1"/>
</dbReference>
<dbReference type="Pfam" id="PF13673">
    <property type="entry name" value="Acetyltransf_10"/>
    <property type="match status" value="2"/>
</dbReference>
<dbReference type="Pfam" id="PF13302">
    <property type="entry name" value="Acetyltransf_3"/>
    <property type="match status" value="1"/>
</dbReference>
<dbReference type="Pfam" id="PF03352">
    <property type="entry name" value="Adenine_glyco"/>
    <property type="match status" value="1"/>
</dbReference>
<dbReference type="Pfam" id="PF00117">
    <property type="entry name" value="GATase"/>
    <property type="match status" value="2"/>
</dbReference>
<dbReference type="Pfam" id="PF00958">
    <property type="entry name" value="GMP_synt_C"/>
    <property type="match status" value="1"/>
</dbReference>
<dbReference type="PRINTS" id="PR00099">
    <property type="entry name" value="CPSGATASE"/>
</dbReference>
<dbReference type="SUPFAM" id="SSF55729">
    <property type="entry name" value="Acyl-CoA N-acyltransferases (Nat)"/>
    <property type="match status" value="3"/>
</dbReference>
<dbReference type="SUPFAM" id="SSF52402">
    <property type="entry name" value="Adenine nucleotide alpha hydrolases-like"/>
    <property type="match status" value="1"/>
</dbReference>
<dbReference type="SUPFAM" id="SSF52317">
    <property type="entry name" value="Class I glutamine amidotransferase-like"/>
    <property type="match status" value="2"/>
</dbReference>
<dbReference type="SUPFAM" id="SSF48150">
    <property type="entry name" value="DNA-glycosylase"/>
    <property type="match status" value="1"/>
</dbReference>
<dbReference type="SUPFAM" id="SSF54810">
    <property type="entry name" value="GMP synthetase C-terminal dimerisation domain"/>
    <property type="match status" value="1"/>
</dbReference>
<dbReference type="PROSITE" id="PS51273">
    <property type="entry name" value="GATASE_TYPE_1"/>
    <property type="match status" value="2"/>
</dbReference>
<dbReference type="PROSITE" id="PS51553">
    <property type="entry name" value="GMPS_ATP_PPASE"/>
    <property type="match status" value="1"/>
</dbReference>
<dbReference type="PROSITE" id="PS51186">
    <property type="entry name" value="GNAT"/>
    <property type="match status" value="3"/>
</dbReference>
<organism>
    <name type="scientific">Helicobacter hepaticus (strain ATCC 51449 / 3B1)</name>
    <dbReference type="NCBI Taxonomy" id="235279"/>
    <lineage>
        <taxon>Bacteria</taxon>
        <taxon>Pseudomonadati</taxon>
        <taxon>Campylobacterota</taxon>
        <taxon>Epsilonproteobacteria</taxon>
        <taxon>Campylobacterales</taxon>
        <taxon>Helicobacteraceae</taxon>
        <taxon>Helicobacter</taxon>
    </lineage>
</organism>
<feature type="chain" id="PRO_0000140132" description="Probable GMP synthase [glutamine-hydrolyzing]">
    <location>
        <begin position="1"/>
        <end position="1375"/>
    </location>
</feature>
<feature type="domain" description="Glutamine amidotransferase type-1; first part" evidence="3">
    <location>
        <begin position="7"/>
        <end position="119"/>
    </location>
</feature>
<feature type="domain" description="N-acetyltransferase 1" evidence="2">
    <location>
        <begin position="141"/>
        <end position="300"/>
    </location>
</feature>
<feature type="domain" description="N-acetyltransferase 2" evidence="2">
    <location>
        <begin position="318"/>
        <end position="484"/>
    </location>
</feature>
<feature type="domain" description="Glutamine amidotransferase type-1; second part" evidence="3">
    <location>
        <begin position="501"/>
        <end position="580"/>
    </location>
</feature>
<feature type="domain" description="N-acetyltransferase 3" evidence="2">
    <location>
        <begin position="612"/>
        <end position="765"/>
    </location>
</feature>
<feature type="domain" description="GMPS ATP-PPase" evidence="4">
    <location>
        <begin position="1055"/>
        <end position="1250"/>
    </location>
</feature>
<feature type="region of interest" description="Insert-1">
    <location>
        <begin position="120"/>
        <end position="500"/>
    </location>
</feature>
<feature type="region of interest" description="Insert-2">
    <location>
        <begin position="597"/>
        <end position="1071"/>
    </location>
</feature>
<feature type="region of interest" description="Disordered" evidence="5">
    <location>
        <begin position="1011"/>
        <end position="1036"/>
    </location>
</feature>
<feature type="compositionally biased region" description="Basic and acidic residues" evidence="5">
    <location>
        <begin position="1014"/>
        <end position="1027"/>
    </location>
</feature>
<feature type="active site" description="Nucleophile" evidence="3">
    <location>
        <position position="84"/>
    </location>
</feature>
<feature type="active site" evidence="3">
    <location>
        <position position="554"/>
    </location>
</feature>
<feature type="active site" evidence="3">
    <location>
        <position position="556"/>
    </location>
</feature>
<feature type="binding site" evidence="4">
    <location>
        <begin position="1083"/>
        <end position="1089"/>
    </location>
    <ligand>
        <name>ATP</name>
        <dbReference type="ChEBI" id="CHEBI:30616"/>
    </ligand>
</feature>
<keyword id="KW-0067">ATP-binding</keyword>
<keyword id="KW-0315">Glutamine amidotransferase</keyword>
<keyword id="KW-0332">GMP biosynthesis</keyword>
<keyword id="KW-0436">Ligase</keyword>
<keyword id="KW-0547">Nucleotide-binding</keyword>
<keyword id="KW-0658">Purine biosynthesis</keyword>
<keyword id="KW-1185">Reference proteome</keyword>
<keyword id="KW-0677">Repeat</keyword>
<evidence type="ECO:0000250" key="1"/>
<evidence type="ECO:0000255" key="2">
    <source>
        <dbReference type="PROSITE-ProRule" id="PRU00532"/>
    </source>
</evidence>
<evidence type="ECO:0000255" key="3">
    <source>
        <dbReference type="PROSITE-ProRule" id="PRU00605"/>
    </source>
</evidence>
<evidence type="ECO:0000255" key="4">
    <source>
        <dbReference type="PROSITE-ProRule" id="PRU00886"/>
    </source>
</evidence>
<evidence type="ECO:0000256" key="5">
    <source>
        <dbReference type="SAM" id="MobiDB-lite"/>
    </source>
</evidence>
<name>GUAA_HELHP</name>
<accession>Q7VG78</accession>